<sequence>MDNDRQKALDTVIKNMEKSFGKGAVMKLGDNIGRRVSTTSTGSVTLDNALGVGGYPKGRIIEIYGPESSGKTTVALHAIAEVQSNGGVAAFIDAEHALDPEYAQALGVDIDNLYLSQPDHGEQGLEIAEAFVRSGAVDIVVVDSVAALTPKAEIEGEMGDTHVGLQARLMSQALRKLSGAISKSNTTAIFINQIREKVGVMFGNPETTPGGRALKFYSSVRLEVRRAEQLKQGQEIVGNRTKIKVVKNKVAPPFRVAEVDIMYGQGISKEGELIDLGVENDIVDKSGAWYSYNGERMGQGKENVKMYLKENPQIKEEIDRKLREKLGISDGDVEETEDAPKSLFDEE</sequence>
<name>RECA_STAA2</name>
<dbReference type="EMBL" id="CP000736">
    <property type="protein sequence ID" value="ABR52222.1"/>
    <property type="molecule type" value="Genomic_DNA"/>
</dbReference>
<dbReference type="SMR" id="A6U1A4"/>
<dbReference type="KEGG" id="sah:SaurJH1_1371"/>
<dbReference type="HOGENOM" id="CLU_040469_1_2_9"/>
<dbReference type="GO" id="GO:0005829">
    <property type="term" value="C:cytosol"/>
    <property type="evidence" value="ECO:0007669"/>
    <property type="project" value="TreeGrafter"/>
</dbReference>
<dbReference type="GO" id="GO:0005524">
    <property type="term" value="F:ATP binding"/>
    <property type="evidence" value="ECO:0007669"/>
    <property type="project" value="UniProtKB-UniRule"/>
</dbReference>
<dbReference type="GO" id="GO:0016887">
    <property type="term" value="F:ATP hydrolysis activity"/>
    <property type="evidence" value="ECO:0007669"/>
    <property type="project" value="InterPro"/>
</dbReference>
<dbReference type="GO" id="GO:0140664">
    <property type="term" value="F:ATP-dependent DNA damage sensor activity"/>
    <property type="evidence" value="ECO:0007669"/>
    <property type="project" value="InterPro"/>
</dbReference>
<dbReference type="GO" id="GO:0003684">
    <property type="term" value="F:damaged DNA binding"/>
    <property type="evidence" value="ECO:0007669"/>
    <property type="project" value="UniProtKB-UniRule"/>
</dbReference>
<dbReference type="GO" id="GO:0003697">
    <property type="term" value="F:single-stranded DNA binding"/>
    <property type="evidence" value="ECO:0007669"/>
    <property type="project" value="UniProtKB-UniRule"/>
</dbReference>
<dbReference type="GO" id="GO:0006310">
    <property type="term" value="P:DNA recombination"/>
    <property type="evidence" value="ECO:0007669"/>
    <property type="project" value="UniProtKB-UniRule"/>
</dbReference>
<dbReference type="GO" id="GO:0006281">
    <property type="term" value="P:DNA repair"/>
    <property type="evidence" value="ECO:0007669"/>
    <property type="project" value="UniProtKB-UniRule"/>
</dbReference>
<dbReference type="GO" id="GO:0009432">
    <property type="term" value="P:SOS response"/>
    <property type="evidence" value="ECO:0007669"/>
    <property type="project" value="UniProtKB-UniRule"/>
</dbReference>
<dbReference type="CDD" id="cd00983">
    <property type="entry name" value="RecA"/>
    <property type="match status" value="1"/>
</dbReference>
<dbReference type="FunFam" id="3.40.50.300:FF:000087">
    <property type="entry name" value="Recombinase RecA"/>
    <property type="match status" value="1"/>
</dbReference>
<dbReference type="Gene3D" id="3.40.50.300">
    <property type="entry name" value="P-loop containing nucleotide triphosphate hydrolases"/>
    <property type="match status" value="1"/>
</dbReference>
<dbReference type="HAMAP" id="MF_00268">
    <property type="entry name" value="RecA"/>
    <property type="match status" value="1"/>
</dbReference>
<dbReference type="InterPro" id="IPR003593">
    <property type="entry name" value="AAA+_ATPase"/>
</dbReference>
<dbReference type="InterPro" id="IPR013765">
    <property type="entry name" value="DNA_recomb/repair_RecA"/>
</dbReference>
<dbReference type="InterPro" id="IPR020584">
    <property type="entry name" value="DNA_recomb/repair_RecA_CS"/>
</dbReference>
<dbReference type="InterPro" id="IPR027417">
    <property type="entry name" value="P-loop_NTPase"/>
</dbReference>
<dbReference type="InterPro" id="IPR049261">
    <property type="entry name" value="RecA-like_C"/>
</dbReference>
<dbReference type="InterPro" id="IPR049428">
    <property type="entry name" value="RecA-like_N"/>
</dbReference>
<dbReference type="InterPro" id="IPR020588">
    <property type="entry name" value="RecA_ATP-bd"/>
</dbReference>
<dbReference type="InterPro" id="IPR023400">
    <property type="entry name" value="RecA_C_sf"/>
</dbReference>
<dbReference type="InterPro" id="IPR020587">
    <property type="entry name" value="RecA_monomer-monomer_interface"/>
</dbReference>
<dbReference type="NCBIfam" id="TIGR02012">
    <property type="entry name" value="tigrfam_recA"/>
    <property type="match status" value="1"/>
</dbReference>
<dbReference type="PANTHER" id="PTHR45900:SF1">
    <property type="entry name" value="MITOCHONDRIAL DNA REPAIR PROTEIN RECA HOMOLOG-RELATED"/>
    <property type="match status" value="1"/>
</dbReference>
<dbReference type="PANTHER" id="PTHR45900">
    <property type="entry name" value="RECA"/>
    <property type="match status" value="1"/>
</dbReference>
<dbReference type="Pfam" id="PF00154">
    <property type="entry name" value="RecA"/>
    <property type="match status" value="1"/>
</dbReference>
<dbReference type="Pfam" id="PF21096">
    <property type="entry name" value="RecA_C"/>
    <property type="match status" value="1"/>
</dbReference>
<dbReference type="PRINTS" id="PR00142">
    <property type="entry name" value="RECA"/>
</dbReference>
<dbReference type="SMART" id="SM00382">
    <property type="entry name" value="AAA"/>
    <property type="match status" value="1"/>
</dbReference>
<dbReference type="SUPFAM" id="SSF52540">
    <property type="entry name" value="P-loop containing nucleoside triphosphate hydrolases"/>
    <property type="match status" value="1"/>
</dbReference>
<dbReference type="SUPFAM" id="SSF54752">
    <property type="entry name" value="RecA protein, C-terminal domain"/>
    <property type="match status" value="1"/>
</dbReference>
<dbReference type="PROSITE" id="PS00321">
    <property type="entry name" value="RECA_1"/>
    <property type="match status" value="1"/>
</dbReference>
<dbReference type="PROSITE" id="PS50162">
    <property type="entry name" value="RECA_2"/>
    <property type="match status" value="1"/>
</dbReference>
<dbReference type="PROSITE" id="PS50163">
    <property type="entry name" value="RECA_3"/>
    <property type="match status" value="1"/>
</dbReference>
<accession>A6U1A4</accession>
<proteinExistence type="inferred from homology"/>
<evidence type="ECO:0000255" key="1">
    <source>
        <dbReference type="HAMAP-Rule" id="MF_00268"/>
    </source>
</evidence>
<evidence type="ECO:0000256" key="2">
    <source>
        <dbReference type="SAM" id="MobiDB-lite"/>
    </source>
</evidence>
<protein>
    <recommendedName>
        <fullName evidence="1">Protein RecA</fullName>
    </recommendedName>
    <alternativeName>
        <fullName evidence="1">Recombinase A</fullName>
    </alternativeName>
</protein>
<feature type="chain" id="PRO_1000078684" description="Protein RecA">
    <location>
        <begin position="1"/>
        <end position="347"/>
    </location>
</feature>
<feature type="region of interest" description="Disordered" evidence="2">
    <location>
        <begin position="325"/>
        <end position="347"/>
    </location>
</feature>
<feature type="compositionally biased region" description="Basic and acidic residues" evidence="2">
    <location>
        <begin position="338"/>
        <end position="347"/>
    </location>
</feature>
<feature type="binding site" evidence="1">
    <location>
        <begin position="65"/>
        <end position="72"/>
    </location>
    <ligand>
        <name>ATP</name>
        <dbReference type="ChEBI" id="CHEBI:30616"/>
    </ligand>
</feature>
<organism>
    <name type="scientific">Staphylococcus aureus (strain JH1)</name>
    <dbReference type="NCBI Taxonomy" id="359787"/>
    <lineage>
        <taxon>Bacteria</taxon>
        <taxon>Bacillati</taxon>
        <taxon>Bacillota</taxon>
        <taxon>Bacilli</taxon>
        <taxon>Bacillales</taxon>
        <taxon>Staphylococcaceae</taxon>
        <taxon>Staphylococcus</taxon>
    </lineage>
</organism>
<keyword id="KW-0067">ATP-binding</keyword>
<keyword id="KW-0963">Cytoplasm</keyword>
<keyword id="KW-0227">DNA damage</keyword>
<keyword id="KW-0233">DNA recombination</keyword>
<keyword id="KW-0234">DNA repair</keyword>
<keyword id="KW-0238">DNA-binding</keyword>
<keyword id="KW-0547">Nucleotide-binding</keyword>
<keyword id="KW-0742">SOS response</keyword>
<reference key="1">
    <citation type="submission" date="2007-06" db="EMBL/GenBank/DDBJ databases">
        <title>Complete sequence of chromosome of Staphylococcus aureus subsp. aureus JH1.</title>
        <authorList>
            <consortium name="US DOE Joint Genome Institute"/>
            <person name="Copeland A."/>
            <person name="Lucas S."/>
            <person name="Lapidus A."/>
            <person name="Barry K."/>
            <person name="Detter J.C."/>
            <person name="Glavina del Rio T."/>
            <person name="Hammon N."/>
            <person name="Israni S."/>
            <person name="Dalin E."/>
            <person name="Tice H."/>
            <person name="Pitluck S."/>
            <person name="Chain P."/>
            <person name="Malfatti S."/>
            <person name="Shin M."/>
            <person name="Vergez L."/>
            <person name="Schmutz J."/>
            <person name="Larimer F."/>
            <person name="Land M."/>
            <person name="Hauser L."/>
            <person name="Kyrpides N."/>
            <person name="Ivanova N."/>
            <person name="Tomasz A."/>
            <person name="Richardson P."/>
        </authorList>
    </citation>
    <scope>NUCLEOTIDE SEQUENCE [LARGE SCALE GENOMIC DNA]</scope>
    <source>
        <strain>JH1</strain>
    </source>
</reference>
<gene>
    <name evidence="1" type="primary">recA</name>
    <name type="ordered locus">SaurJH1_1371</name>
</gene>
<comment type="function">
    <text evidence="1">Can catalyze the hydrolysis of ATP in the presence of single-stranded DNA, the ATP-dependent uptake of single-stranded DNA by duplex DNA, and the ATP-dependent hybridization of homologous single-stranded DNAs. It interacts with LexA causing its activation and leading to its autocatalytic cleavage.</text>
</comment>
<comment type="subcellular location">
    <subcellularLocation>
        <location evidence="1">Cytoplasm</location>
    </subcellularLocation>
</comment>
<comment type="similarity">
    <text evidence="1">Belongs to the RecA family.</text>
</comment>